<comment type="similarity">
    <text evidence="3">Belongs to the STIG1 family.</text>
</comment>
<organism evidence="7">
    <name type="scientific">Arabidopsis thaliana</name>
    <name type="common">Mouse-ear cress</name>
    <dbReference type="NCBI Taxonomy" id="3702"/>
    <lineage>
        <taxon>Eukaryota</taxon>
        <taxon>Viridiplantae</taxon>
        <taxon>Streptophyta</taxon>
        <taxon>Embryophyta</taxon>
        <taxon>Tracheophyta</taxon>
        <taxon>Spermatophyta</taxon>
        <taxon>Magnoliopsida</taxon>
        <taxon>eudicotyledons</taxon>
        <taxon>Gunneridae</taxon>
        <taxon>Pentapetalae</taxon>
        <taxon>rosids</taxon>
        <taxon>malvids</taxon>
        <taxon>Brassicales</taxon>
        <taxon>Brassicaceae</taxon>
        <taxon>Camelineae</taxon>
        <taxon>Arabidopsis</taxon>
    </lineage>
</organism>
<feature type="signal peptide" evidence="1">
    <location>
        <begin position="1"/>
        <end position="23"/>
    </location>
</feature>
<feature type="chain" id="PRO_0000431932" description="Stigma-specific STIG1-like protein 3" evidence="1">
    <location>
        <begin position="24"/>
        <end position="154"/>
    </location>
</feature>
<proteinExistence type="evidence at transcript level"/>
<dbReference type="EMBL" id="AC079027">
    <property type="protein sequence ID" value="AAG50782.1"/>
    <property type="molecule type" value="Genomic_DNA"/>
</dbReference>
<dbReference type="EMBL" id="AC079279">
    <property type="protein sequence ID" value="AAG51198.1"/>
    <property type="molecule type" value="Genomic_DNA"/>
</dbReference>
<dbReference type="EMBL" id="CP002684">
    <property type="protein sequence ID" value="AEE32583.1"/>
    <property type="molecule type" value="Genomic_DNA"/>
</dbReference>
<dbReference type="EMBL" id="DQ056490">
    <property type="protein sequence ID" value="AAY78647.1"/>
    <property type="molecule type" value="mRNA"/>
</dbReference>
<dbReference type="PIR" id="A96544">
    <property type="entry name" value="A96544"/>
</dbReference>
<dbReference type="RefSeq" id="NP_175487.1">
    <property type="nucleotide sequence ID" value="NM_103954.2"/>
</dbReference>
<dbReference type="STRING" id="3702.Q9C6T5"/>
<dbReference type="PaxDb" id="3702-AT1G50720.1"/>
<dbReference type="ProteomicsDB" id="228346"/>
<dbReference type="EnsemblPlants" id="AT1G50720.1">
    <property type="protein sequence ID" value="AT1G50720.1"/>
    <property type="gene ID" value="AT1G50720"/>
</dbReference>
<dbReference type="GeneID" id="841494"/>
<dbReference type="Gramene" id="AT1G50720.1">
    <property type="protein sequence ID" value="AT1G50720.1"/>
    <property type="gene ID" value="AT1G50720"/>
</dbReference>
<dbReference type="KEGG" id="ath:AT1G50720"/>
<dbReference type="Araport" id="AT1G50720"/>
<dbReference type="TAIR" id="AT1G50720"/>
<dbReference type="eggNOG" id="ENOG502S1NG">
    <property type="taxonomic scope" value="Eukaryota"/>
</dbReference>
<dbReference type="HOGENOM" id="CLU_111795_1_0_1"/>
<dbReference type="InParanoid" id="Q9C6T5"/>
<dbReference type="OMA" id="CANLAYD"/>
<dbReference type="OrthoDB" id="1841769at2759"/>
<dbReference type="PhylomeDB" id="Q9C6T5"/>
<dbReference type="PRO" id="PR:Q9C6T5"/>
<dbReference type="Proteomes" id="UP000006548">
    <property type="component" value="Chromosome 1"/>
</dbReference>
<dbReference type="ExpressionAtlas" id="Q9C6T5">
    <property type="expression patterns" value="baseline and differential"/>
</dbReference>
<dbReference type="InterPro" id="IPR006969">
    <property type="entry name" value="Stig-like"/>
</dbReference>
<dbReference type="PANTHER" id="PTHR33227">
    <property type="entry name" value="STIGMA-SPECIFIC STIG1-LIKE PROTEIN 3"/>
    <property type="match status" value="1"/>
</dbReference>
<dbReference type="PANTHER" id="PTHR33227:SF18">
    <property type="entry name" value="STIGMA-SPECIFIC STIG1-LIKE PROTEIN 3"/>
    <property type="match status" value="1"/>
</dbReference>
<dbReference type="Pfam" id="PF04885">
    <property type="entry name" value="Stig1"/>
    <property type="match status" value="1"/>
</dbReference>
<evidence type="ECO:0000255" key="1"/>
<evidence type="ECO:0000303" key="2">
    <source>
    </source>
</evidence>
<evidence type="ECO:0000305" key="3"/>
<evidence type="ECO:0000312" key="4">
    <source>
        <dbReference type="Araport" id="AT1G50720"/>
    </source>
</evidence>
<evidence type="ECO:0000312" key="5">
    <source>
        <dbReference type="EMBL" id="AAG50782.1"/>
    </source>
</evidence>
<evidence type="ECO:0000312" key="6">
    <source>
        <dbReference type="EMBL" id="AAG51198.1"/>
    </source>
</evidence>
<evidence type="ECO:0000312" key="7">
    <source>
        <dbReference type="Proteomes" id="UP000006548"/>
    </source>
</evidence>
<protein>
    <recommendedName>
        <fullName evidence="2">Stigma-specific STIG1-like protein 3</fullName>
    </recommendedName>
</protein>
<keyword id="KW-1185">Reference proteome</keyword>
<keyword id="KW-0732">Signal</keyword>
<sequence length="154" mass="17074">MGHRNTVLTILLTISIAIMVLIATVFVSNNKTETLLQTHTQTQTLITTGRVSRFLAQNAKNGRNLNAADHCNKEEEICKSQGMYNSTMACCSNKCVDLAYDNDNCGACKNQCKFTQTCCRGECVYLAYDKRHCGECNHSCLVGEFCVYGLCNYA</sequence>
<gene>
    <name evidence="4" type="ordered locus">At1g50720</name>
    <name evidence="6" type="ORF">F17J6.24</name>
    <name evidence="5" type="ORF">F4M15.5</name>
</gene>
<reference key="1">
    <citation type="journal article" date="2000" name="Nature">
        <title>Sequence and analysis of chromosome 1 of the plant Arabidopsis thaliana.</title>
        <authorList>
            <person name="Theologis A."/>
            <person name="Ecker J.R."/>
            <person name="Palm C.J."/>
            <person name="Federspiel N.A."/>
            <person name="Kaul S."/>
            <person name="White O."/>
            <person name="Alonso J."/>
            <person name="Altafi H."/>
            <person name="Araujo R."/>
            <person name="Bowman C.L."/>
            <person name="Brooks S.Y."/>
            <person name="Buehler E."/>
            <person name="Chan A."/>
            <person name="Chao Q."/>
            <person name="Chen H."/>
            <person name="Cheuk R.F."/>
            <person name="Chin C.W."/>
            <person name="Chung M.K."/>
            <person name="Conn L."/>
            <person name="Conway A.B."/>
            <person name="Conway A.R."/>
            <person name="Creasy T.H."/>
            <person name="Dewar K."/>
            <person name="Dunn P."/>
            <person name="Etgu P."/>
            <person name="Feldblyum T.V."/>
            <person name="Feng J.-D."/>
            <person name="Fong B."/>
            <person name="Fujii C.Y."/>
            <person name="Gill J.E."/>
            <person name="Goldsmith A.D."/>
            <person name="Haas B."/>
            <person name="Hansen N.F."/>
            <person name="Hughes B."/>
            <person name="Huizar L."/>
            <person name="Hunter J.L."/>
            <person name="Jenkins J."/>
            <person name="Johnson-Hopson C."/>
            <person name="Khan S."/>
            <person name="Khaykin E."/>
            <person name="Kim C.J."/>
            <person name="Koo H.L."/>
            <person name="Kremenetskaia I."/>
            <person name="Kurtz D.B."/>
            <person name="Kwan A."/>
            <person name="Lam B."/>
            <person name="Langin-Hooper S."/>
            <person name="Lee A."/>
            <person name="Lee J.M."/>
            <person name="Lenz C.A."/>
            <person name="Li J.H."/>
            <person name="Li Y.-P."/>
            <person name="Lin X."/>
            <person name="Liu S.X."/>
            <person name="Liu Z.A."/>
            <person name="Luros J.S."/>
            <person name="Maiti R."/>
            <person name="Marziali A."/>
            <person name="Militscher J."/>
            <person name="Miranda M."/>
            <person name="Nguyen M."/>
            <person name="Nierman W.C."/>
            <person name="Osborne B.I."/>
            <person name="Pai G."/>
            <person name="Peterson J."/>
            <person name="Pham P.K."/>
            <person name="Rizzo M."/>
            <person name="Rooney T."/>
            <person name="Rowley D."/>
            <person name="Sakano H."/>
            <person name="Salzberg S.L."/>
            <person name="Schwartz J.R."/>
            <person name="Shinn P."/>
            <person name="Southwick A.M."/>
            <person name="Sun H."/>
            <person name="Tallon L.J."/>
            <person name="Tambunga G."/>
            <person name="Toriumi M.J."/>
            <person name="Town C.D."/>
            <person name="Utterback T."/>
            <person name="Van Aken S."/>
            <person name="Vaysberg M."/>
            <person name="Vysotskaia V.S."/>
            <person name="Walker M."/>
            <person name="Wu D."/>
            <person name="Yu G."/>
            <person name="Fraser C.M."/>
            <person name="Venter J.C."/>
            <person name="Davis R.W."/>
        </authorList>
    </citation>
    <scope>NUCLEOTIDE SEQUENCE [LARGE SCALE GENOMIC DNA]</scope>
    <source>
        <strain>cv. Columbia</strain>
    </source>
</reference>
<reference key="2">
    <citation type="journal article" date="2017" name="Plant J.">
        <title>Araport11: a complete reannotation of the Arabidopsis thaliana reference genome.</title>
        <authorList>
            <person name="Cheng C.Y."/>
            <person name="Krishnakumar V."/>
            <person name="Chan A.P."/>
            <person name="Thibaud-Nissen F."/>
            <person name="Schobel S."/>
            <person name="Town C.D."/>
        </authorList>
    </citation>
    <scope>GENOME REANNOTATION</scope>
    <source>
        <strain>cv. Columbia</strain>
    </source>
</reference>
<reference key="3">
    <citation type="submission" date="2005-05" db="EMBL/GenBank/DDBJ databases">
        <authorList>
            <person name="Underwood B.A."/>
            <person name="Xiao Y.-L."/>
            <person name="Moskal W.A. Jr."/>
            <person name="Monaghan E.L."/>
            <person name="Wang W."/>
            <person name="Redman J.C."/>
            <person name="Wu H.C."/>
            <person name="Utterback T."/>
            <person name="Town C.D."/>
        </authorList>
    </citation>
    <scope>NUCLEOTIDE SEQUENCE [LARGE SCALE MRNA]</scope>
    <source>
        <strain>cv. Columbia</strain>
    </source>
</reference>
<reference key="4">
    <citation type="journal article" date="2009" name="Proc. Natl. Acad. Sci. U.S.A.">
        <title>Arabidopsis GRI is involved in the regulation of cell death induced by extracellular ROS.</title>
        <authorList>
            <person name="Wrzaczek M."/>
            <person name="Brosche M."/>
            <person name="Kollist H."/>
            <person name="Kangasjarvi J."/>
        </authorList>
    </citation>
    <scope>GENE FAMILY</scope>
</reference>
<accession>Q9C6T5</accession>
<accession>Q9C6P1</accession>
<name>STGL3_ARATH</name>